<proteinExistence type="inferred from homology"/>
<keyword id="KW-0067">ATP-binding</keyword>
<keyword id="KW-0143">Chaperone</keyword>
<keyword id="KW-0547">Nucleotide-binding</keyword>
<keyword id="KW-0597">Phosphoprotein</keyword>
<keyword id="KW-1185">Reference proteome</keyword>
<keyword id="KW-0346">Stress response</keyword>
<organism>
    <name type="scientific">Streptococcus gordonii (strain Challis / ATCC 35105 / BCRC 15272 / CH1 / DL1 / V288)</name>
    <dbReference type="NCBI Taxonomy" id="467705"/>
    <lineage>
        <taxon>Bacteria</taxon>
        <taxon>Bacillati</taxon>
        <taxon>Bacillota</taxon>
        <taxon>Bacilli</taxon>
        <taxon>Lactobacillales</taxon>
        <taxon>Streptococcaceae</taxon>
        <taxon>Streptococcus</taxon>
    </lineage>
</organism>
<name>DNAK_STRGC</name>
<sequence>MSKIIGIDLGTTNSAVAVLEGTESKIIANPEGNRTTPSVVSFKNGEIIVGDAAKRQAVTNPDTVISIKSKMGTSEKVSANGKEYTPQEISAMILQYLKGYAEEYLGEKVTKAVITVPAYFNDAQRQATKDAGKIAGLEVERIVNEPTAAALAYGLDKTDKEEKILVFDLGGGTFDVSILELGDGVFDVLATAGDNKLGGDDFDQKIIDHMVAEFKKENGIDLSTDKMALQRLKDAAEKAKKDLSGVTSTQISLPFITAGAAGPLHLEMTLTRAKFDDLTRDLVERTKTPVRQALSDAGLSLSEIDEVILVGGSTRIPAVVEAVKAETGKEPNKSVNPDEVVAMGAAIQGGVITGDVKDVVLLDVTPLSLGIETMGGVFTKLIDRNTTIPTSKSQVFSTAADNQPAVDIHVLQGERPMAADNKTLGRFQLTDIPAAPRGIPQIEVTFDIDKNGIVSVKAKDLGTQKEQTIVIQSNSGLTDEEIDRMMKDAEANAEADKKRKEEVDLRNEVDQAIFATEKTIKETEGKGFDAERDAAQAALDDLKKAQEDNKLDEMKAKLEALNEKAQGLAVKLYEQAAAAQQAQAGAEGAQATGNAGDDVVDGEFTEK</sequence>
<comment type="function">
    <text evidence="1">Acts as a chaperone.</text>
</comment>
<comment type="induction">
    <text evidence="1">By stress conditions e.g. heat shock.</text>
</comment>
<comment type="similarity">
    <text evidence="1">Belongs to the heat shock protein 70 family.</text>
</comment>
<evidence type="ECO:0000255" key="1">
    <source>
        <dbReference type="HAMAP-Rule" id="MF_00332"/>
    </source>
</evidence>
<evidence type="ECO:0000256" key="2">
    <source>
        <dbReference type="SAM" id="MobiDB-lite"/>
    </source>
</evidence>
<protein>
    <recommendedName>
        <fullName evidence="1">Chaperone protein DnaK</fullName>
    </recommendedName>
    <alternativeName>
        <fullName evidence="1">HSP70</fullName>
    </alternativeName>
    <alternativeName>
        <fullName evidence="1">Heat shock 70 kDa protein</fullName>
    </alternativeName>
    <alternativeName>
        <fullName evidence="1">Heat shock protein 70</fullName>
    </alternativeName>
</protein>
<accession>A8AVA8</accession>
<gene>
    <name evidence="1" type="primary">dnaK</name>
    <name type="ordered locus">SGO_0402</name>
</gene>
<dbReference type="EMBL" id="CP000725">
    <property type="protein sequence ID" value="ABV10760.1"/>
    <property type="molecule type" value="Genomic_DNA"/>
</dbReference>
<dbReference type="RefSeq" id="WP_011999914.1">
    <property type="nucleotide sequence ID" value="NC_009785.1"/>
</dbReference>
<dbReference type="SMR" id="A8AVA8"/>
<dbReference type="STRING" id="467705.SGO_0402"/>
<dbReference type="KEGG" id="sgo:SGO_0402"/>
<dbReference type="eggNOG" id="COG0443">
    <property type="taxonomic scope" value="Bacteria"/>
</dbReference>
<dbReference type="HOGENOM" id="CLU_005965_2_4_9"/>
<dbReference type="Proteomes" id="UP000001131">
    <property type="component" value="Chromosome"/>
</dbReference>
<dbReference type="GO" id="GO:0005524">
    <property type="term" value="F:ATP binding"/>
    <property type="evidence" value="ECO:0007669"/>
    <property type="project" value="UniProtKB-UniRule"/>
</dbReference>
<dbReference type="GO" id="GO:0140662">
    <property type="term" value="F:ATP-dependent protein folding chaperone"/>
    <property type="evidence" value="ECO:0007669"/>
    <property type="project" value="InterPro"/>
</dbReference>
<dbReference type="GO" id="GO:0051082">
    <property type="term" value="F:unfolded protein binding"/>
    <property type="evidence" value="ECO:0007669"/>
    <property type="project" value="InterPro"/>
</dbReference>
<dbReference type="CDD" id="cd10234">
    <property type="entry name" value="ASKHA_NBD_HSP70_DnaK-like"/>
    <property type="match status" value="1"/>
</dbReference>
<dbReference type="FunFam" id="2.60.34.10:FF:000014">
    <property type="entry name" value="Chaperone protein DnaK HSP70"/>
    <property type="match status" value="1"/>
</dbReference>
<dbReference type="FunFam" id="1.20.1270.10:FF:000004">
    <property type="entry name" value="Molecular chaperone DnaK"/>
    <property type="match status" value="1"/>
</dbReference>
<dbReference type="FunFam" id="3.30.420.40:FF:000071">
    <property type="entry name" value="Molecular chaperone DnaK"/>
    <property type="match status" value="1"/>
</dbReference>
<dbReference type="FunFam" id="3.90.640.10:FF:000003">
    <property type="entry name" value="Molecular chaperone DnaK"/>
    <property type="match status" value="1"/>
</dbReference>
<dbReference type="Gene3D" id="1.20.1270.10">
    <property type="match status" value="1"/>
</dbReference>
<dbReference type="Gene3D" id="3.30.420.40">
    <property type="match status" value="2"/>
</dbReference>
<dbReference type="Gene3D" id="3.90.640.10">
    <property type="entry name" value="Actin, Chain A, domain 4"/>
    <property type="match status" value="1"/>
</dbReference>
<dbReference type="Gene3D" id="2.60.34.10">
    <property type="entry name" value="Substrate Binding Domain Of DNAk, Chain A, domain 1"/>
    <property type="match status" value="1"/>
</dbReference>
<dbReference type="HAMAP" id="MF_00332">
    <property type="entry name" value="DnaK"/>
    <property type="match status" value="1"/>
</dbReference>
<dbReference type="InterPro" id="IPR043129">
    <property type="entry name" value="ATPase_NBD"/>
</dbReference>
<dbReference type="InterPro" id="IPR012725">
    <property type="entry name" value="Chaperone_DnaK"/>
</dbReference>
<dbReference type="InterPro" id="IPR018181">
    <property type="entry name" value="Heat_shock_70_CS"/>
</dbReference>
<dbReference type="InterPro" id="IPR029048">
    <property type="entry name" value="HSP70_C_sf"/>
</dbReference>
<dbReference type="InterPro" id="IPR029047">
    <property type="entry name" value="HSP70_peptide-bd_sf"/>
</dbReference>
<dbReference type="InterPro" id="IPR013126">
    <property type="entry name" value="Hsp_70_fam"/>
</dbReference>
<dbReference type="NCBIfam" id="NF001413">
    <property type="entry name" value="PRK00290.1"/>
    <property type="match status" value="1"/>
</dbReference>
<dbReference type="NCBIfam" id="TIGR02350">
    <property type="entry name" value="prok_dnaK"/>
    <property type="match status" value="1"/>
</dbReference>
<dbReference type="PANTHER" id="PTHR19375">
    <property type="entry name" value="HEAT SHOCK PROTEIN 70KDA"/>
    <property type="match status" value="1"/>
</dbReference>
<dbReference type="Pfam" id="PF00012">
    <property type="entry name" value="HSP70"/>
    <property type="match status" value="1"/>
</dbReference>
<dbReference type="PRINTS" id="PR00301">
    <property type="entry name" value="HEATSHOCK70"/>
</dbReference>
<dbReference type="SUPFAM" id="SSF53067">
    <property type="entry name" value="Actin-like ATPase domain"/>
    <property type="match status" value="2"/>
</dbReference>
<dbReference type="SUPFAM" id="SSF100934">
    <property type="entry name" value="Heat shock protein 70kD (HSP70), C-terminal subdomain"/>
    <property type="match status" value="1"/>
</dbReference>
<dbReference type="SUPFAM" id="SSF100920">
    <property type="entry name" value="Heat shock protein 70kD (HSP70), peptide-binding domain"/>
    <property type="match status" value="1"/>
</dbReference>
<dbReference type="PROSITE" id="PS00297">
    <property type="entry name" value="HSP70_1"/>
    <property type="match status" value="1"/>
</dbReference>
<dbReference type="PROSITE" id="PS00329">
    <property type="entry name" value="HSP70_2"/>
    <property type="match status" value="1"/>
</dbReference>
<dbReference type="PROSITE" id="PS01036">
    <property type="entry name" value="HSP70_3"/>
    <property type="match status" value="1"/>
</dbReference>
<reference key="1">
    <citation type="journal article" date="2007" name="J. Bacteriol.">
        <title>Genome-wide transcriptional changes in Streptococcus gordonii in response to competence signaling peptide.</title>
        <authorList>
            <person name="Vickerman M.M."/>
            <person name="Iobst S."/>
            <person name="Jesionowski A.M."/>
            <person name="Gill S.R."/>
        </authorList>
    </citation>
    <scope>NUCLEOTIDE SEQUENCE [LARGE SCALE GENOMIC DNA]</scope>
    <source>
        <strain>Challis / ATCC 35105 / BCRC 15272 / CH1 / DL1 / V288</strain>
    </source>
</reference>
<feature type="chain" id="PRO_1000079251" description="Chaperone protein DnaK">
    <location>
        <begin position="1"/>
        <end position="607"/>
    </location>
</feature>
<feature type="region of interest" description="Disordered" evidence="2">
    <location>
        <begin position="580"/>
        <end position="607"/>
    </location>
</feature>
<feature type="compositionally biased region" description="Low complexity" evidence="2">
    <location>
        <begin position="580"/>
        <end position="591"/>
    </location>
</feature>
<feature type="compositionally biased region" description="Acidic residues" evidence="2">
    <location>
        <begin position="598"/>
        <end position="607"/>
    </location>
</feature>
<feature type="modified residue" description="Phosphothreonine; by autocatalysis" evidence="1">
    <location>
        <position position="173"/>
    </location>
</feature>